<organismHost>
    <name type="scientific">Macaca mulatta</name>
    <name type="common">Rhesus macaque</name>
    <dbReference type="NCBI Taxonomy" id="9544"/>
</organismHost>
<evidence type="ECO:0000255" key="1">
    <source>
        <dbReference type="HAMAP-Rule" id="MF_04128"/>
    </source>
</evidence>
<dbReference type="EC" id="3.1.4.-" evidence="1"/>
<dbReference type="EC" id="2.7.7.50" evidence="1"/>
<dbReference type="EC" id="2.1.1.56" evidence="1"/>
<dbReference type="EMBL" id="EF583012">
    <property type="protein sequence ID" value="ABQ59574.1"/>
    <property type="molecule type" value="Genomic_RNA"/>
</dbReference>
<dbReference type="SMR" id="B3F2X7"/>
<dbReference type="Proteomes" id="UP000145116">
    <property type="component" value="Genome"/>
</dbReference>
<dbReference type="GO" id="GO:0019013">
    <property type="term" value="C:viral nucleocapsid"/>
    <property type="evidence" value="ECO:0007669"/>
    <property type="project" value="UniProtKB-UniRule"/>
</dbReference>
<dbReference type="GO" id="GO:0005525">
    <property type="term" value="F:GTP binding"/>
    <property type="evidence" value="ECO:0007669"/>
    <property type="project" value="UniProtKB-UniRule"/>
</dbReference>
<dbReference type="GO" id="GO:0016787">
    <property type="term" value="F:hydrolase activity"/>
    <property type="evidence" value="ECO:0007669"/>
    <property type="project" value="UniProtKB-KW"/>
</dbReference>
<dbReference type="GO" id="GO:0004482">
    <property type="term" value="F:mRNA 5'-cap (guanine-N7-)-methyltransferase activity"/>
    <property type="evidence" value="ECO:0007669"/>
    <property type="project" value="UniProtKB-UniRule"/>
</dbReference>
<dbReference type="GO" id="GO:0004484">
    <property type="term" value="F:mRNA guanylyltransferase activity"/>
    <property type="evidence" value="ECO:0007669"/>
    <property type="project" value="UniProtKB-UniRule"/>
</dbReference>
<dbReference type="GO" id="GO:0003723">
    <property type="term" value="F:RNA binding"/>
    <property type="evidence" value="ECO:0007669"/>
    <property type="project" value="UniProtKB-UniRule"/>
</dbReference>
<dbReference type="GO" id="GO:0052170">
    <property type="term" value="P:symbiont-mediated suppression of host innate immune response"/>
    <property type="evidence" value="ECO:0007669"/>
    <property type="project" value="UniProtKB-KW"/>
</dbReference>
<dbReference type="GO" id="GO:0016032">
    <property type="term" value="P:viral process"/>
    <property type="evidence" value="ECO:0007669"/>
    <property type="project" value="UniProtKB-UniRule"/>
</dbReference>
<dbReference type="CDD" id="cd20757">
    <property type="entry name" value="capping_2-OMTase_Rotavirus"/>
    <property type="match status" value="1"/>
</dbReference>
<dbReference type="HAMAP" id="MF_04124">
    <property type="entry name" value="Rota_VP3"/>
    <property type="match status" value="1"/>
</dbReference>
<dbReference type="HAMAP" id="MF_04128">
    <property type="entry name" value="Rota_VP3_A"/>
    <property type="match status" value="1"/>
</dbReference>
<dbReference type="InterPro" id="IPR011181">
    <property type="entry name" value="VP3_Rotav"/>
</dbReference>
<dbReference type="Pfam" id="PF06929">
    <property type="entry name" value="Rotavirus_VP3"/>
    <property type="match status" value="1"/>
</dbReference>
<dbReference type="PIRSF" id="PIRSF004015">
    <property type="entry name" value="LigT_rotavirus"/>
    <property type="match status" value="1"/>
</dbReference>
<dbReference type="PROSITE" id="PS51589">
    <property type="entry name" value="SAM_MT56_VP3"/>
    <property type="match status" value="1"/>
</dbReference>
<keyword id="KW-0342">GTP-binding</keyword>
<keyword id="KW-0945">Host-virus interaction</keyword>
<keyword id="KW-0378">Hydrolase</keyword>
<keyword id="KW-1090">Inhibition of host innate immune response by virus</keyword>
<keyword id="KW-0489">Methyltransferase</keyword>
<keyword id="KW-0506">mRNA capping</keyword>
<keyword id="KW-0507">mRNA processing</keyword>
<keyword id="KW-0511">Multifunctional enzyme</keyword>
<keyword id="KW-0547">Nucleotide-binding</keyword>
<keyword id="KW-0548">Nucleotidyltransferase</keyword>
<keyword id="KW-0694">RNA-binding</keyword>
<keyword id="KW-0949">S-adenosyl-L-methionine</keyword>
<keyword id="KW-0808">Transferase</keyword>
<keyword id="KW-0899">Viral immunoevasion</keyword>
<keyword id="KW-0946">Virion</keyword>
<organism>
    <name type="scientific">Rotavirus A (isolate RVA/Monkey/United States/TUCH/2003/G3P[24])</name>
    <name type="common">RV-A</name>
    <dbReference type="NCBI Taxonomy" id="444186"/>
    <lineage>
        <taxon>Viruses</taxon>
        <taxon>Riboviria</taxon>
        <taxon>Orthornavirae</taxon>
        <taxon>Duplornaviricota</taxon>
        <taxon>Resentoviricetes</taxon>
        <taxon>Reovirales</taxon>
        <taxon>Sedoreoviridae</taxon>
        <taxon>Rotavirus</taxon>
        <taxon>Rotavirus A</taxon>
    </lineage>
</organism>
<proteinExistence type="inferred from homology"/>
<name>VP3_ROTTU</name>
<feature type="chain" id="PRO_0000368071" description="Protein VP3">
    <location>
        <begin position="1"/>
        <end position="835"/>
    </location>
</feature>
<feature type="region of interest" description="N7-methyltransferase activity" evidence="1">
    <location>
        <begin position="171"/>
        <end position="245"/>
    </location>
</feature>
<feature type="region of interest" description="2'-O-methyltransferase activity" evidence="1">
    <location>
        <begin position="246"/>
        <end position="428"/>
    </location>
</feature>
<feature type="region of interest" description="N7-methyltransferase activity" evidence="1">
    <location>
        <begin position="429"/>
        <end position="555"/>
    </location>
</feature>
<feature type="region of interest" description="GTase/RTPase activity" evidence="1">
    <location>
        <begin position="556"/>
        <end position="692"/>
    </location>
</feature>
<feature type="region of interest" description="2'-5'-phosphodiesterase activity" evidence="1">
    <location>
        <begin position="693"/>
        <end position="835"/>
    </location>
</feature>
<feature type="active site" description="For 2'-5'-phosphodiesterase activity" evidence="1">
    <location>
        <position position="718"/>
    </location>
</feature>
<feature type="active site" description="For 2'-5'-phosphodiesterase activity" evidence="1">
    <location>
        <position position="720"/>
    </location>
</feature>
<feature type="active site" description="For 2'-5'-phosphodiesterase activity" evidence="1">
    <location>
        <position position="797"/>
    </location>
</feature>
<feature type="active site" description="For 2'-5'-phosphodiesterase activity" evidence="1">
    <location>
        <position position="799"/>
    </location>
</feature>
<comment type="function">
    <text evidence="1">Multifunctional enzyme involved in mRNA capping. Catalyzes the formation of the 5' cap structure on the viral plus-strand transcripts. Specifically binds to GTP and displays guanylyltransferase and methyltransferase activities. Has affinity for ssRNA but not for dsRNA. Capping activity is non-specific and caps RNAs that initiate with either a G or an A residue. Together with VP1 polymerase, forms a VP1-VP3 complex positioned near the channels situated at each of the five-fold vertices of the core. Following infection, the outermost layer of the virus is lost, leaving a double-layered particle (DLP) made up of the core and VP6 shell. VP1 then catalyzes the transcription of fully conservative plus-strand genomic RNAs that are capped by VP3 and extruded through the DLP's channels into the cytoplasm where they function as mRNAs for translation of viral proteins. DLPs probably have an RNA triphosphatase activity as well, whereas open cores do not.</text>
</comment>
<comment type="function">
    <text evidence="1">Counteracts the host innate immune response thanks to its phosphodiesterase that degrades the 5'-triphosphorylated, 2'-5' linked adenylate oligomers produced by the host cell IFN-inducible 2',5'-oligoadenylate synthetase (OAS). The host RNaseL is therefore not activated.</text>
</comment>
<comment type="catalytic activity">
    <reaction evidence="1">
        <text>a 5'-end diphospho-ribonucleoside in mRNA + GTP + H(+) = a 5'-end (5'-triphosphoguanosine)-ribonucleoside in mRNA + diphosphate</text>
        <dbReference type="Rhea" id="RHEA:67012"/>
        <dbReference type="Rhea" id="RHEA-COMP:17165"/>
        <dbReference type="Rhea" id="RHEA-COMP:17166"/>
        <dbReference type="ChEBI" id="CHEBI:15378"/>
        <dbReference type="ChEBI" id="CHEBI:33019"/>
        <dbReference type="ChEBI" id="CHEBI:37565"/>
        <dbReference type="ChEBI" id="CHEBI:167616"/>
        <dbReference type="ChEBI" id="CHEBI:167617"/>
        <dbReference type="EC" id="2.7.7.50"/>
    </reaction>
</comment>
<comment type="catalytic activity">
    <reaction evidence="1">
        <text>a 5'-end (5'-triphosphoguanosine)-ribonucleoside in mRNA + S-adenosyl-L-methionine = a 5'-end (N(7)-methyl 5'-triphosphoguanosine)-ribonucleoside in mRNA + S-adenosyl-L-homocysteine</text>
        <dbReference type="Rhea" id="RHEA:67008"/>
        <dbReference type="Rhea" id="RHEA-COMP:17166"/>
        <dbReference type="Rhea" id="RHEA-COMP:17167"/>
        <dbReference type="ChEBI" id="CHEBI:57856"/>
        <dbReference type="ChEBI" id="CHEBI:59789"/>
        <dbReference type="ChEBI" id="CHEBI:156461"/>
        <dbReference type="ChEBI" id="CHEBI:167617"/>
        <dbReference type="EC" id="2.1.1.56"/>
    </reaction>
</comment>
<comment type="catalytic activity">
    <reaction evidence="1">
        <text>5'-triphosphoadenylyl-(2'-&gt;5')-adenylyl-(2'-&gt;5')-adenosine + 2 H2O = 2 AMP + ATP + 2 H(+)</text>
        <dbReference type="Rhea" id="RHEA:45964"/>
        <dbReference type="ChEBI" id="CHEBI:15377"/>
        <dbReference type="ChEBI" id="CHEBI:15378"/>
        <dbReference type="ChEBI" id="CHEBI:30616"/>
        <dbReference type="ChEBI" id="CHEBI:67143"/>
        <dbReference type="ChEBI" id="CHEBI:456215"/>
    </reaction>
</comment>
<comment type="subunit">
    <text evidence="1">Interacts with VP1. Interacts with VP2.</text>
</comment>
<comment type="subcellular location">
    <subcellularLocation>
        <location evidence="1">Virion</location>
    </subcellularLocation>
    <text evidence="1">Attached inside the inner capsid as a minor component. There are about 11 to 12 copies per virion.</text>
</comment>
<comment type="domain">
    <text evidence="1">Contains a bipartite N7-methyltransferase domain, a 2'-O-methyltransferase domain and a GTase/RTPase domain. The C-terminus contains a phosphodiesterase domain that degrades the 5'-triphosphorylated, 2'-5' linked adenylate oligomers produced by the host cell in response to IFN stimulation.</text>
</comment>
<comment type="similarity">
    <text evidence="1">Belongs to the rotavirus VP3 family.</text>
</comment>
<reference key="1">
    <citation type="submission" date="2007-04" db="EMBL/GenBank/DDBJ databases">
        <authorList>
            <person name="Brown T.L."/>
            <person name="Yang H."/>
            <person name="Patton J.T."/>
        </authorList>
    </citation>
    <scope>NUCLEOTIDE SEQUENCE [GENOMIC RNA]</scope>
</reference>
<sequence>MKVLALRHSVAQVYADTQVYTHDDTKDNYENAFLISNLTTHNILYLNYSTKTLEILNKSGIAAVEIQSLEELFTLIRCNFTYDYENNIIYLHDYSYYTNNEIRTDQHWVTKTDIEEYLLPGWKLTYVGYNGSDTRGHYNFSFTCQNAATDDDLIIEYIYSEALDFQNFMLKKIKERMTTSLPIARLSNRVFRDKLFPSLRKKYQHIVNVGPRNESMFTFLNFPSIKQFSNGPYLVKDTIKLKQERWLGKRVSQFDIGQYKNMMNVITTVYYYYNLYQKKPIIYMVGSAPSYWIYDVKQYSDFTFETWDPLDTPYSSIHHKELFFEKDVAKLRDNSILYIDIRTDRRNADWREWRKTVEEQTISNLKLAYQYLASGKSKVCCVKMTAMDLELPISAKLLHHPTTEIRSEFYLLLDIWDISNVKRFIPKGVLYSFINNIITENVFIQPPFKIKTSKNEYIVALYALSNDFNDRMNVINLINNQKQSLITVRINNTFKDEPKVGFKNIYDWTFLPTDFNTTDSIITSYDGCLGIFGLSISLASKPTGNNHLFILNGTDKYYKLDQFANHTGISRRSHQIRFSESATSYSGYIFRDLSNNNFNLIGTNIENSVSGHVYNALIYYRYNYSFDLKRWIYLHSIEKADIEGGKYYEHAPIELIYACRSAKEFALLQDDLTVLRYANEIERYIHKVYSITYADDPNYFIGIKFKHIPYKYDVKIPHLTFGVLFISDNMIPDVTRIIKDMKKELFEMDVTTSYTYMLSDGTYVANISGVLSTYFKMYNLFYKNQITFGQSRMFIPHITLSFSSRKTVRIETVKLKIDSIYLRKIRGDTVFDMSE</sequence>
<protein>
    <recommendedName>
        <fullName evidence="1">Protein VP3</fullName>
    </recommendedName>
    <domain>
        <recommendedName>
            <fullName evidence="1">2',5'-phosphodiesterase</fullName>
            <ecNumber evidence="1">3.1.4.-</ecNumber>
        </recommendedName>
    </domain>
    <domain>
        <recommendedName>
            <fullName evidence="1">mRNA guanylyltransferase</fullName>
            <ecNumber evidence="1">2.7.7.50</ecNumber>
        </recommendedName>
    </domain>
    <domain>
        <recommendedName>
            <fullName evidence="1">mRNA (guanine-N(7))-methyltransferase</fullName>
            <ecNumber evidence="1">2.1.1.56</ecNumber>
        </recommendedName>
    </domain>
</protein>
<accession>B3F2X7</accession>